<name>RS6_SALNS</name>
<protein>
    <recommendedName>
        <fullName evidence="1">Small ribosomal subunit protein bS6</fullName>
    </recommendedName>
    <alternativeName>
        <fullName evidence="3">30S ribosomal protein S6</fullName>
    </alternativeName>
</protein>
<accession>B4T3F1</accession>
<feature type="chain" id="PRO_1000120801" description="Small ribosomal subunit protein bS6">
    <location>
        <begin position="1"/>
        <end position="131"/>
    </location>
</feature>
<feature type="region of interest" description="Disordered" evidence="2">
    <location>
        <begin position="98"/>
        <end position="131"/>
    </location>
</feature>
<feature type="compositionally biased region" description="Basic and acidic residues" evidence="2">
    <location>
        <begin position="104"/>
        <end position="116"/>
    </location>
</feature>
<feature type="compositionally biased region" description="Acidic residues" evidence="2">
    <location>
        <begin position="120"/>
        <end position="131"/>
    </location>
</feature>
<keyword id="KW-0687">Ribonucleoprotein</keyword>
<keyword id="KW-0689">Ribosomal protein</keyword>
<keyword id="KW-0694">RNA-binding</keyword>
<keyword id="KW-0699">rRNA-binding</keyword>
<gene>
    <name evidence="1" type="primary">rpsF</name>
    <name type="ordered locus">SNSL254_A4751</name>
</gene>
<reference key="1">
    <citation type="journal article" date="2011" name="J. Bacteriol.">
        <title>Comparative genomics of 28 Salmonella enterica isolates: evidence for CRISPR-mediated adaptive sublineage evolution.</title>
        <authorList>
            <person name="Fricke W.F."/>
            <person name="Mammel M.K."/>
            <person name="McDermott P.F."/>
            <person name="Tartera C."/>
            <person name="White D.G."/>
            <person name="Leclerc J.E."/>
            <person name="Ravel J."/>
            <person name="Cebula T.A."/>
        </authorList>
    </citation>
    <scope>NUCLEOTIDE SEQUENCE [LARGE SCALE GENOMIC DNA]</scope>
    <source>
        <strain>SL254</strain>
    </source>
</reference>
<proteinExistence type="inferred from homology"/>
<comment type="function">
    <text evidence="1">Binds together with bS18 to 16S ribosomal RNA.</text>
</comment>
<comment type="similarity">
    <text evidence="1">Belongs to the bacterial ribosomal protein bS6 family.</text>
</comment>
<organism>
    <name type="scientific">Salmonella newport (strain SL254)</name>
    <dbReference type="NCBI Taxonomy" id="423368"/>
    <lineage>
        <taxon>Bacteria</taxon>
        <taxon>Pseudomonadati</taxon>
        <taxon>Pseudomonadota</taxon>
        <taxon>Gammaproteobacteria</taxon>
        <taxon>Enterobacterales</taxon>
        <taxon>Enterobacteriaceae</taxon>
        <taxon>Salmonella</taxon>
    </lineage>
</organism>
<dbReference type="EMBL" id="CP001113">
    <property type="protein sequence ID" value="ACF61919.1"/>
    <property type="molecule type" value="Genomic_DNA"/>
</dbReference>
<dbReference type="RefSeq" id="WP_001216673.1">
    <property type="nucleotide sequence ID" value="NZ_CCMR01000003.1"/>
</dbReference>
<dbReference type="SMR" id="B4T3F1"/>
<dbReference type="GeneID" id="92804768"/>
<dbReference type="KEGG" id="see:SNSL254_A4751"/>
<dbReference type="HOGENOM" id="CLU_113441_6_1_6"/>
<dbReference type="Proteomes" id="UP000008824">
    <property type="component" value="Chromosome"/>
</dbReference>
<dbReference type="GO" id="GO:0022627">
    <property type="term" value="C:cytosolic small ribosomal subunit"/>
    <property type="evidence" value="ECO:0007669"/>
    <property type="project" value="TreeGrafter"/>
</dbReference>
<dbReference type="GO" id="GO:0070181">
    <property type="term" value="F:small ribosomal subunit rRNA binding"/>
    <property type="evidence" value="ECO:0007669"/>
    <property type="project" value="TreeGrafter"/>
</dbReference>
<dbReference type="GO" id="GO:0003735">
    <property type="term" value="F:structural constituent of ribosome"/>
    <property type="evidence" value="ECO:0007669"/>
    <property type="project" value="InterPro"/>
</dbReference>
<dbReference type="GO" id="GO:0006412">
    <property type="term" value="P:translation"/>
    <property type="evidence" value="ECO:0007669"/>
    <property type="project" value="UniProtKB-UniRule"/>
</dbReference>
<dbReference type="CDD" id="cd00473">
    <property type="entry name" value="bS6"/>
    <property type="match status" value="1"/>
</dbReference>
<dbReference type="FunFam" id="3.30.70.60:FF:000003">
    <property type="entry name" value="30S ribosomal protein S6"/>
    <property type="match status" value="1"/>
</dbReference>
<dbReference type="Gene3D" id="3.30.70.60">
    <property type="match status" value="1"/>
</dbReference>
<dbReference type="HAMAP" id="MF_00360">
    <property type="entry name" value="Ribosomal_bS6"/>
    <property type="match status" value="1"/>
</dbReference>
<dbReference type="InterPro" id="IPR000529">
    <property type="entry name" value="Ribosomal_bS6"/>
</dbReference>
<dbReference type="InterPro" id="IPR020815">
    <property type="entry name" value="Ribosomal_bS6_CS"/>
</dbReference>
<dbReference type="InterPro" id="IPR035980">
    <property type="entry name" value="Ribosomal_bS6_sf"/>
</dbReference>
<dbReference type="InterPro" id="IPR020814">
    <property type="entry name" value="Ribosomal_S6_plastid/chlpt"/>
</dbReference>
<dbReference type="InterPro" id="IPR014717">
    <property type="entry name" value="Transl_elong_EF1B/ribsomal_bS6"/>
</dbReference>
<dbReference type="NCBIfam" id="TIGR00166">
    <property type="entry name" value="S6"/>
    <property type="match status" value="1"/>
</dbReference>
<dbReference type="PANTHER" id="PTHR21011">
    <property type="entry name" value="MITOCHONDRIAL 28S RIBOSOMAL PROTEIN S6"/>
    <property type="match status" value="1"/>
</dbReference>
<dbReference type="PANTHER" id="PTHR21011:SF1">
    <property type="entry name" value="SMALL RIBOSOMAL SUBUNIT PROTEIN BS6M"/>
    <property type="match status" value="1"/>
</dbReference>
<dbReference type="Pfam" id="PF01250">
    <property type="entry name" value="Ribosomal_S6"/>
    <property type="match status" value="1"/>
</dbReference>
<dbReference type="SUPFAM" id="SSF54995">
    <property type="entry name" value="Ribosomal protein S6"/>
    <property type="match status" value="1"/>
</dbReference>
<dbReference type="PROSITE" id="PS01048">
    <property type="entry name" value="RIBOSOMAL_S6"/>
    <property type="match status" value="1"/>
</dbReference>
<sequence length="131" mass="15173">MRHYEIVFMVHPDQSEQVPGMIERYSAAITGAEGKIHRLEDWGRRQLAYPINKLHKAHYVLMNVEAPQEVIDELETTFRFNDAVIRSMVMRTKHAVTEASPMVKAKDERRERRDDFANETADDAEAGDSEE</sequence>
<evidence type="ECO:0000255" key="1">
    <source>
        <dbReference type="HAMAP-Rule" id="MF_00360"/>
    </source>
</evidence>
<evidence type="ECO:0000256" key="2">
    <source>
        <dbReference type="SAM" id="MobiDB-lite"/>
    </source>
</evidence>
<evidence type="ECO:0000305" key="3"/>